<proteinExistence type="inferred from homology"/>
<organism>
    <name type="scientific">Bordetella parapertussis (strain 12822 / ATCC BAA-587 / NCTC 13253)</name>
    <dbReference type="NCBI Taxonomy" id="257311"/>
    <lineage>
        <taxon>Bacteria</taxon>
        <taxon>Pseudomonadati</taxon>
        <taxon>Pseudomonadota</taxon>
        <taxon>Betaproteobacteria</taxon>
        <taxon>Burkholderiales</taxon>
        <taxon>Alcaligenaceae</taxon>
        <taxon>Bordetella</taxon>
    </lineage>
</organism>
<gene>
    <name evidence="1" type="primary">ugpC</name>
    <name type="ordered locus">BPP2947</name>
</gene>
<sequence>MATLSFRNVKKTYAGNVPVIHGSDMDVADGEFIVIVGPSGCGKSTLMRMVAGLETVTEGEILIDDKVVNTLEPAERDIAMVFQNYALYPHMSVFDNMAYGLKIRRLPKDEIRKRVEAAAQILELGKLLDRRPRALSGGQRQRVAMGRAIVREPKVFLFDEPLSNLDAKLRVAMRLEILKLHRRLNTTSLYVTHDQVEAMTLAHRMVVMYQGVPEQIGTPMEVFEKPASTFVAGFIGSPPMNLLEVAVGGDGIVHTSDGIALDISPLAVPQQVRGRKVVMGLRPEHMLLNAQGLAAEIEMIETLGSEQLVHGRCGKHMVVVRCSTRQFSETPARVGDTLTIGPDGRHPLHWFEADTGRRVEGL</sequence>
<accession>Q7W6G5</accession>
<protein>
    <recommendedName>
        <fullName evidence="1">sn-glycerol-3-phosphate import ATP-binding protein UgpC</fullName>
        <ecNumber evidence="1">7.6.2.10</ecNumber>
    </recommendedName>
</protein>
<comment type="function">
    <text evidence="1">Part of the ABC transporter complex UgpBAEC involved in sn-glycerol-3-phosphate (G3P) import. Responsible for energy coupling to the transport system.</text>
</comment>
<comment type="catalytic activity">
    <reaction evidence="1">
        <text>sn-glycerol 3-phosphate(out) + ATP + H2O = sn-glycerol 3-phosphate(in) + ADP + phosphate + H(+)</text>
        <dbReference type="Rhea" id="RHEA:21668"/>
        <dbReference type="ChEBI" id="CHEBI:15377"/>
        <dbReference type="ChEBI" id="CHEBI:15378"/>
        <dbReference type="ChEBI" id="CHEBI:30616"/>
        <dbReference type="ChEBI" id="CHEBI:43474"/>
        <dbReference type="ChEBI" id="CHEBI:57597"/>
        <dbReference type="ChEBI" id="CHEBI:456216"/>
        <dbReference type="EC" id="7.6.2.10"/>
    </reaction>
</comment>
<comment type="subunit">
    <text evidence="1">The complex is composed of two ATP-binding proteins (UgpC), two transmembrane proteins (UgpA and UgpE) and a solute-binding protein (UgpB).</text>
</comment>
<comment type="subcellular location">
    <subcellularLocation>
        <location evidence="1">Cell inner membrane</location>
        <topology evidence="1">Peripheral membrane protein</topology>
    </subcellularLocation>
</comment>
<comment type="similarity">
    <text evidence="1">Belongs to the ABC transporter superfamily. sn-glycerol-3-phosphate importer (TC 3.A.1.1.3) family.</text>
</comment>
<name>UGPC_BORPA</name>
<reference key="1">
    <citation type="journal article" date="2003" name="Nat. Genet.">
        <title>Comparative analysis of the genome sequences of Bordetella pertussis, Bordetella parapertussis and Bordetella bronchiseptica.</title>
        <authorList>
            <person name="Parkhill J."/>
            <person name="Sebaihia M."/>
            <person name="Preston A."/>
            <person name="Murphy L.D."/>
            <person name="Thomson N.R."/>
            <person name="Harris D.E."/>
            <person name="Holden M.T.G."/>
            <person name="Churcher C.M."/>
            <person name="Bentley S.D."/>
            <person name="Mungall K.L."/>
            <person name="Cerdeno-Tarraga A.-M."/>
            <person name="Temple L."/>
            <person name="James K.D."/>
            <person name="Harris B."/>
            <person name="Quail M.A."/>
            <person name="Achtman M."/>
            <person name="Atkin R."/>
            <person name="Baker S."/>
            <person name="Basham D."/>
            <person name="Bason N."/>
            <person name="Cherevach I."/>
            <person name="Chillingworth T."/>
            <person name="Collins M."/>
            <person name="Cronin A."/>
            <person name="Davis P."/>
            <person name="Doggett J."/>
            <person name="Feltwell T."/>
            <person name="Goble A."/>
            <person name="Hamlin N."/>
            <person name="Hauser H."/>
            <person name="Holroyd S."/>
            <person name="Jagels K."/>
            <person name="Leather S."/>
            <person name="Moule S."/>
            <person name="Norberczak H."/>
            <person name="O'Neil S."/>
            <person name="Ormond D."/>
            <person name="Price C."/>
            <person name="Rabbinowitsch E."/>
            <person name="Rutter S."/>
            <person name="Sanders M."/>
            <person name="Saunders D."/>
            <person name="Seeger K."/>
            <person name="Sharp S."/>
            <person name="Simmonds M."/>
            <person name="Skelton J."/>
            <person name="Squares R."/>
            <person name="Squares S."/>
            <person name="Stevens K."/>
            <person name="Unwin L."/>
            <person name="Whitehead S."/>
            <person name="Barrell B.G."/>
            <person name="Maskell D.J."/>
        </authorList>
    </citation>
    <scope>NUCLEOTIDE SEQUENCE [LARGE SCALE GENOMIC DNA]</scope>
    <source>
        <strain>12822 / ATCC BAA-587 / NCTC 13253</strain>
    </source>
</reference>
<keyword id="KW-0067">ATP-binding</keyword>
<keyword id="KW-0997">Cell inner membrane</keyword>
<keyword id="KW-1003">Cell membrane</keyword>
<keyword id="KW-0472">Membrane</keyword>
<keyword id="KW-0547">Nucleotide-binding</keyword>
<keyword id="KW-0762">Sugar transport</keyword>
<keyword id="KW-1278">Translocase</keyword>
<keyword id="KW-0813">Transport</keyword>
<feature type="chain" id="PRO_0000289731" description="sn-glycerol-3-phosphate import ATP-binding protein UgpC">
    <location>
        <begin position="1"/>
        <end position="362"/>
    </location>
</feature>
<feature type="domain" description="ABC transporter" evidence="1">
    <location>
        <begin position="4"/>
        <end position="235"/>
    </location>
</feature>
<feature type="binding site" evidence="1">
    <location>
        <begin position="37"/>
        <end position="44"/>
    </location>
    <ligand>
        <name>ATP</name>
        <dbReference type="ChEBI" id="CHEBI:30616"/>
    </ligand>
</feature>
<evidence type="ECO:0000255" key="1">
    <source>
        <dbReference type="HAMAP-Rule" id="MF_01727"/>
    </source>
</evidence>
<dbReference type="EC" id="7.6.2.10" evidence="1"/>
<dbReference type="EMBL" id="BX640432">
    <property type="protein sequence ID" value="CAE38239.1"/>
    <property type="molecule type" value="Genomic_DNA"/>
</dbReference>
<dbReference type="RefSeq" id="WP_010928814.1">
    <property type="nucleotide sequence ID" value="NC_002928.3"/>
</dbReference>
<dbReference type="SMR" id="Q7W6G5"/>
<dbReference type="GeneID" id="93204735"/>
<dbReference type="KEGG" id="bpa:BPP2947"/>
<dbReference type="HOGENOM" id="CLU_000604_1_1_4"/>
<dbReference type="Proteomes" id="UP000001421">
    <property type="component" value="Chromosome"/>
</dbReference>
<dbReference type="GO" id="GO:0055052">
    <property type="term" value="C:ATP-binding cassette (ABC) transporter complex, substrate-binding subunit-containing"/>
    <property type="evidence" value="ECO:0007669"/>
    <property type="project" value="TreeGrafter"/>
</dbReference>
<dbReference type="GO" id="GO:0015430">
    <property type="term" value="F:ABC-type glycerol-3-phosphate transporter activity"/>
    <property type="evidence" value="ECO:0007669"/>
    <property type="project" value="UniProtKB-EC"/>
</dbReference>
<dbReference type="GO" id="GO:0005524">
    <property type="term" value="F:ATP binding"/>
    <property type="evidence" value="ECO:0007669"/>
    <property type="project" value="UniProtKB-KW"/>
</dbReference>
<dbReference type="GO" id="GO:0016887">
    <property type="term" value="F:ATP hydrolysis activity"/>
    <property type="evidence" value="ECO:0007669"/>
    <property type="project" value="InterPro"/>
</dbReference>
<dbReference type="GO" id="GO:0008643">
    <property type="term" value="P:carbohydrate transport"/>
    <property type="evidence" value="ECO:0007669"/>
    <property type="project" value="InterPro"/>
</dbReference>
<dbReference type="GO" id="GO:0001407">
    <property type="term" value="P:glycerophosphodiester transmembrane transport"/>
    <property type="evidence" value="ECO:0007669"/>
    <property type="project" value="TreeGrafter"/>
</dbReference>
<dbReference type="CDD" id="cd03301">
    <property type="entry name" value="ABC_MalK_N"/>
    <property type="match status" value="1"/>
</dbReference>
<dbReference type="FunFam" id="3.40.50.300:FF:000042">
    <property type="entry name" value="Maltose/maltodextrin ABC transporter, ATP-binding protein"/>
    <property type="match status" value="1"/>
</dbReference>
<dbReference type="Gene3D" id="2.40.50.100">
    <property type="match status" value="1"/>
</dbReference>
<dbReference type="Gene3D" id="2.40.50.140">
    <property type="entry name" value="Nucleic acid-binding proteins"/>
    <property type="match status" value="1"/>
</dbReference>
<dbReference type="Gene3D" id="3.40.50.300">
    <property type="entry name" value="P-loop containing nucleotide triphosphate hydrolases"/>
    <property type="match status" value="1"/>
</dbReference>
<dbReference type="InterPro" id="IPR003593">
    <property type="entry name" value="AAA+_ATPase"/>
</dbReference>
<dbReference type="InterPro" id="IPR003439">
    <property type="entry name" value="ABC_transporter-like_ATP-bd"/>
</dbReference>
<dbReference type="InterPro" id="IPR017871">
    <property type="entry name" value="ABC_transporter-like_CS"/>
</dbReference>
<dbReference type="InterPro" id="IPR015855">
    <property type="entry name" value="ABC_transpr_MalK-like"/>
</dbReference>
<dbReference type="InterPro" id="IPR047641">
    <property type="entry name" value="ABC_transpr_MalK/UgpC-like"/>
</dbReference>
<dbReference type="InterPro" id="IPR008995">
    <property type="entry name" value="Mo/tungstate-bd_C_term_dom"/>
</dbReference>
<dbReference type="InterPro" id="IPR012340">
    <property type="entry name" value="NA-bd_OB-fold"/>
</dbReference>
<dbReference type="InterPro" id="IPR040582">
    <property type="entry name" value="OB_MalK-like"/>
</dbReference>
<dbReference type="InterPro" id="IPR027417">
    <property type="entry name" value="P-loop_NTPase"/>
</dbReference>
<dbReference type="NCBIfam" id="NF008653">
    <property type="entry name" value="PRK11650.1"/>
    <property type="match status" value="1"/>
</dbReference>
<dbReference type="PANTHER" id="PTHR43875">
    <property type="entry name" value="MALTODEXTRIN IMPORT ATP-BINDING PROTEIN MSMX"/>
    <property type="match status" value="1"/>
</dbReference>
<dbReference type="PANTHER" id="PTHR43875:SF12">
    <property type="entry name" value="SN-GLYCEROL-3-PHOSPHATE IMPORT ATP-BINDING PROTEIN UGPC"/>
    <property type="match status" value="1"/>
</dbReference>
<dbReference type="Pfam" id="PF00005">
    <property type="entry name" value="ABC_tran"/>
    <property type="match status" value="1"/>
</dbReference>
<dbReference type="Pfam" id="PF17912">
    <property type="entry name" value="OB_MalK"/>
    <property type="match status" value="1"/>
</dbReference>
<dbReference type="SMART" id="SM00382">
    <property type="entry name" value="AAA"/>
    <property type="match status" value="1"/>
</dbReference>
<dbReference type="SUPFAM" id="SSF50331">
    <property type="entry name" value="MOP-like"/>
    <property type="match status" value="1"/>
</dbReference>
<dbReference type="SUPFAM" id="SSF52540">
    <property type="entry name" value="P-loop containing nucleoside triphosphate hydrolases"/>
    <property type="match status" value="1"/>
</dbReference>
<dbReference type="PROSITE" id="PS00211">
    <property type="entry name" value="ABC_TRANSPORTER_1"/>
    <property type="match status" value="1"/>
</dbReference>
<dbReference type="PROSITE" id="PS50893">
    <property type="entry name" value="ABC_TRANSPORTER_2"/>
    <property type="match status" value="1"/>
</dbReference>
<dbReference type="PROSITE" id="PS51315">
    <property type="entry name" value="UGPC"/>
    <property type="match status" value="1"/>
</dbReference>